<protein>
    <recommendedName>
        <fullName>Proto-oncogene vav</fullName>
    </recommendedName>
</protein>
<keyword id="KW-0344">Guanine-nucleotide releasing factor</keyword>
<keyword id="KW-0479">Metal-binding</keyword>
<keyword id="KW-0597">Phosphoprotein</keyword>
<keyword id="KW-0656">Proto-oncogene</keyword>
<keyword id="KW-1185">Reference proteome</keyword>
<keyword id="KW-0677">Repeat</keyword>
<keyword id="KW-0727">SH2 domain</keyword>
<keyword id="KW-0728">SH3 domain</keyword>
<keyword id="KW-0862">Zinc</keyword>
<keyword id="KW-0863">Zinc-finger</keyword>
<sequence length="844" mass="98243">MELWRQCTHWLIQCRVLPPSHRVTWDGAQVCELAQALRDGVLLCQLLNNLLPHAINLREVNLRPQMSQFLCLKNIRTFLSTCYEKFGLKRSELFEAFDLFDVQDFGKVIYTLSALSWTPIAQNKGIMPFPTEESVGDEDIYSGLSDQIDDTVEEDEDLYDCVENEEAEGDEVYEDLMRSEPVPMPPKMTEYDKRCCCLREIQQTEEKYTDTLGSIQQHFMKPLQRFLKPQDVEIIFINIEDLLRVHTHFLKEMKEALANPGASTLYQVFIKYKERFLIYGRYCSQVESASKHLDRVATAREDVQMKLEECSQRANNGRFTLRDLLMVPMQRVLKYHLLLQELVKHTQDAMEKDNLRLALDAMRDLAQCVNEVKRDNETLRQITNFQLSIENLDQSLAHYGRPKIDGELKITSVERRSKMDRYAFLLDKALLICKRRGDTYDLKDFVNLHSFQVRDDSSGERDNKKWTHMFLLIEDQGAQGYELFFKTRELKKKWMEQFEMAISNIYPENATANGHDFQMFSFEETTSCKACQMLLRGTFYQGYRCQRCRAPAHKECLGRVPPCGRHGQDYSGTMKKDKPHRRAQDKKRNELGLPKMEVCQEYYGLPPPPGAIGPFLRLNPGDIVELTKAEAEQNWWEGRNISTNEVGWFPCNRVKPYVHGPPQDLSVHLWYAGPMERAGAESILTNRSDGTFLVRQRVKDAAEFAISIKYNVEVKHIKIMTAEGLYRITEKKAFRGLTELVEFYQQNSLKDCFKSLDTTLQFPFKEPERRAINKPSAGSIKIFGTAKARYDFCARDRSELSLKEGDIVKILNKKGQQGWWRGEIYGRIGWFPSNYVEEDYSEYC</sequence>
<reference key="1">
    <citation type="submission" date="2006-09" db="EMBL/GenBank/DDBJ databases">
        <authorList>
            <consortium name="NIH - Mammalian Gene Collection (MGC) project"/>
        </authorList>
    </citation>
    <scope>NUCLEOTIDE SEQUENCE [LARGE SCALE MRNA]</scope>
    <source>
        <strain>Hereford</strain>
        <tissue>Hippocampus</tissue>
    </source>
</reference>
<gene>
    <name type="primary">VAV1</name>
</gene>
<accession>Q08DN7</accession>
<name>VAV_BOVIN</name>
<dbReference type="EMBL" id="BC123646">
    <property type="protein sequence ID" value="AAI23647.1"/>
    <property type="molecule type" value="mRNA"/>
</dbReference>
<dbReference type="RefSeq" id="NP_001071542.1">
    <property type="nucleotide sequence ID" value="NM_001078074.1"/>
</dbReference>
<dbReference type="BMRB" id="Q08DN7"/>
<dbReference type="SMR" id="Q08DN7"/>
<dbReference type="FunCoup" id="Q08DN7">
    <property type="interactions" value="1548"/>
</dbReference>
<dbReference type="STRING" id="9913.ENSBTAP00000050922"/>
<dbReference type="Ensembl" id="ENSBTAT00000056825.4">
    <property type="protein sequence ID" value="ENSBTAP00000050922.3"/>
    <property type="gene ID" value="ENSBTAG00000039160.4"/>
</dbReference>
<dbReference type="GeneID" id="617345"/>
<dbReference type="KEGG" id="bta:617345"/>
<dbReference type="CTD" id="7409"/>
<dbReference type="VEuPathDB" id="HostDB:ENSBTAG00000039160"/>
<dbReference type="VGNC" id="VGNC:36772">
    <property type="gene designation" value="VAV1"/>
</dbReference>
<dbReference type="GeneTree" id="ENSGT00940000159125"/>
<dbReference type="InParanoid" id="Q08DN7"/>
<dbReference type="OMA" id="PYISRPT"/>
<dbReference type="OrthoDB" id="5340910at2759"/>
<dbReference type="Reactome" id="R-BTA-114604">
    <property type="pathway name" value="GPVI-mediated activation cascade"/>
</dbReference>
<dbReference type="Reactome" id="R-BTA-1257604">
    <property type="pathway name" value="PIP3 activates AKT signaling"/>
</dbReference>
<dbReference type="Reactome" id="R-BTA-1433557">
    <property type="pathway name" value="Signaling by SCF-KIT"/>
</dbReference>
<dbReference type="Reactome" id="R-BTA-193648">
    <property type="pathway name" value="NRAGE signals death through JNK"/>
</dbReference>
<dbReference type="Reactome" id="R-BTA-2029482">
    <property type="pathway name" value="Regulation of actin dynamics for phagocytic cup formation"/>
</dbReference>
<dbReference type="Reactome" id="R-BTA-2871796">
    <property type="pathway name" value="FCERI mediated MAPK activation"/>
</dbReference>
<dbReference type="Reactome" id="R-BTA-2871809">
    <property type="pathway name" value="FCERI mediated Ca+2 mobilization"/>
</dbReference>
<dbReference type="Reactome" id="R-BTA-389359">
    <property type="pathway name" value="CD28 dependent Vav1 pathway"/>
</dbReference>
<dbReference type="Reactome" id="R-BTA-416482">
    <property type="pathway name" value="G alpha (12/13) signalling events"/>
</dbReference>
<dbReference type="Reactome" id="R-BTA-4420097">
    <property type="pathway name" value="VEGFA-VEGFR2 Pathway"/>
</dbReference>
<dbReference type="Reactome" id="R-BTA-512988">
    <property type="pathway name" value="Interleukin-3, Interleukin-5 and GM-CSF signaling"/>
</dbReference>
<dbReference type="Reactome" id="R-BTA-5218920">
    <property type="pathway name" value="VEGFR2 mediated vascular permeability"/>
</dbReference>
<dbReference type="Reactome" id="R-BTA-6811558">
    <property type="pathway name" value="PI5P, PP2A and IER3 Regulate PI3K/AKT Signaling"/>
</dbReference>
<dbReference type="Reactome" id="R-BTA-8980692">
    <property type="pathway name" value="RHOA GTPase cycle"/>
</dbReference>
<dbReference type="Reactome" id="R-BTA-9013149">
    <property type="pathway name" value="RAC1 GTPase cycle"/>
</dbReference>
<dbReference type="Reactome" id="R-BTA-9013404">
    <property type="pathway name" value="RAC2 GTPase cycle"/>
</dbReference>
<dbReference type="Reactome" id="R-BTA-9013408">
    <property type="pathway name" value="RHOG GTPase cycle"/>
</dbReference>
<dbReference type="Reactome" id="R-BTA-9027284">
    <property type="pathway name" value="Erythropoietin activates RAS"/>
</dbReference>
<dbReference type="Reactome" id="R-BTA-912631">
    <property type="pathway name" value="Regulation of signaling by CBL"/>
</dbReference>
<dbReference type="Reactome" id="R-BTA-9748787">
    <property type="pathway name" value="Azathioprine ADME"/>
</dbReference>
<dbReference type="Reactome" id="R-BTA-983695">
    <property type="pathway name" value="Antigen activates B Cell Receptor (BCR) leading to generation of second messengers"/>
</dbReference>
<dbReference type="Proteomes" id="UP000009136">
    <property type="component" value="Chromosome 7"/>
</dbReference>
<dbReference type="Bgee" id="ENSBTAG00000039160">
    <property type="expression patterns" value="Expressed in neutrophil and 105 other cell types or tissues"/>
</dbReference>
<dbReference type="GO" id="GO:0005911">
    <property type="term" value="C:cell-cell junction"/>
    <property type="evidence" value="ECO:0007669"/>
    <property type="project" value="Ensembl"/>
</dbReference>
<dbReference type="GO" id="GO:0005737">
    <property type="term" value="C:cytoplasm"/>
    <property type="evidence" value="ECO:0000318"/>
    <property type="project" value="GO_Central"/>
</dbReference>
<dbReference type="GO" id="GO:0005085">
    <property type="term" value="F:guanyl-nucleotide exchange factor activity"/>
    <property type="evidence" value="ECO:0000318"/>
    <property type="project" value="GO_Central"/>
</dbReference>
<dbReference type="GO" id="GO:0140031">
    <property type="term" value="F:phosphorylation-dependent protein binding"/>
    <property type="evidence" value="ECO:0007669"/>
    <property type="project" value="Ensembl"/>
</dbReference>
<dbReference type="GO" id="GO:0001784">
    <property type="term" value="F:phosphotyrosine residue binding"/>
    <property type="evidence" value="ECO:0007669"/>
    <property type="project" value="Ensembl"/>
</dbReference>
<dbReference type="GO" id="GO:0008270">
    <property type="term" value="F:zinc ion binding"/>
    <property type="evidence" value="ECO:0007669"/>
    <property type="project" value="UniProtKB-KW"/>
</dbReference>
<dbReference type="GO" id="GO:0016477">
    <property type="term" value="P:cell migration"/>
    <property type="evidence" value="ECO:0000318"/>
    <property type="project" value="GO_Central"/>
</dbReference>
<dbReference type="GO" id="GO:0007186">
    <property type="term" value="P:G protein-coupled receptor signaling pathway"/>
    <property type="evidence" value="ECO:0007669"/>
    <property type="project" value="Ensembl"/>
</dbReference>
<dbReference type="GO" id="GO:0002768">
    <property type="term" value="P:immune response-regulating cell surface receptor signaling pathway"/>
    <property type="evidence" value="ECO:0000318"/>
    <property type="project" value="GO_Central"/>
</dbReference>
<dbReference type="GO" id="GO:0007229">
    <property type="term" value="P:integrin-mediated signaling pathway"/>
    <property type="evidence" value="ECO:0007669"/>
    <property type="project" value="Ensembl"/>
</dbReference>
<dbReference type="GO" id="GO:0030101">
    <property type="term" value="P:natural killer cell activation"/>
    <property type="evidence" value="ECO:0007669"/>
    <property type="project" value="Ensembl"/>
</dbReference>
<dbReference type="GO" id="GO:0042267">
    <property type="term" value="P:natural killer cell mediated cytotoxicity"/>
    <property type="evidence" value="ECO:0007669"/>
    <property type="project" value="Ensembl"/>
</dbReference>
<dbReference type="GO" id="GO:0030593">
    <property type="term" value="P:neutrophil chemotaxis"/>
    <property type="evidence" value="ECO:0007669"/>
    <property type="project" value="Ensembl"/>
</dbReference>
<dbReference type="GO" id="GO:0006909">
    <property type="term" value="P:phagocytosis"/>
    <property type="evidence" value="ECO:0007669"/>
    <property type="project" value="Ensembl"/>
</dbReference>
<dbReference type="GO" id="GO:0045954">
    <property type="term" value="P:positive regulation of natural killer cell mediated cytotoxicity"/>
    <property type="evidence" value="ECO:0007669"/>
    <property type="project" value="Ensembl"/>
</dbReference>
<dbReference type="GO" id="GO:0051897">
    <property type="term" value="P:positive regulation of phosphatidylinositol 3-kinase/protein kinase B signal transduction"/>
    <property type="evidence" value="ECO:0000318"/>
    <property type="project" value="GO_Central"/>
</dbReference>
<dbReference type="GO" id="GO:0072593">
    <property type="term" value="P:reactive oxygen species metabolic process"/>
    <property type="evidence" value="ECO:0007669"/>
    <property type="project" value="Ensembl"/>
</dbReference>
<dbReference type="GO" id="GO:0008361">
    <property type="term" value="P:regulation of cell size"/>
    <property type="evidence" value="ECO:0007669"/>
    <property type="project" value="Ensembl"/>
</dbReference>
<dbReference type="GO" id="GO:0007264">
    <property type="term" value="P:small GTPase-mediated signal transduction"/>
    <property type="evidence" value="ECO:0000318"/>
    <property type="project" value="GO_Central"/>
</dbReference>
<dbReference type="GO" id="GO:0031295">
    <property type="term" value="P:T cell costimulation"/>
    <property type="evidence" value="ECO:0007669"/>
    <property type="project" value="Ensembl"/>
</dbReference>
<dbReference type="GO" id="GO:0030217">
    <property type="term" value="P:T cell differentiation"/>
    <property type="evidence" value="ECO:0007669"/>
    <property type="project" value="Ensembl"/>
</dbReference>
<dbReference type="CDD" id="cd20867">
    <property type="entry name" value="C1_VAV1"/>
    <property type="match status" value="1"/>
</dbReference>
<dbReference type="CDD" id="cd21262">
    <property type="entry name" value="CH_VAV1"/>
    <property type="match status" value="1"/>
</dbReference>
<dbReference type="CDD" id="cd01223">
    <property type="entry name" value="PH_Vav"/>
    <property type="match status" value="1"/>
</dbReference>
<dbReference type="CDD" id="cd00160">
    <property type="entry name" value="RhoGEF"/>
    <property type="match status" value="1"/>
</dbReference>
<dbReference type="CDD" id="cd10405">
    <property type="entry name" value="SH2_Vav1"/>
    <property type="match status" value="1"/>
</dbReference>
<dbReference type="CDD" id="cd11979">
    <property type="entry name" value="SH3_VAV1_1"/>
    <property type="match status" value="1"/>
</dbReference>
<dbReference type="CDD" id="cd11976">
    <property type="entry name" value="SH3_VAV1_2"/>
    <property type="match status" value="1"/>
</dbReference>
<dbReference type="FunFam" id="1.20.900.10:FF:000009">
    <property type="entry name" value="Vav guanine nucleotide exchange factor 1"/>
    <property type="match status" value="1"/>
</dbReference>
<dbReference type="FunFam" id="3.30.60.20:FF:000015">
    <property type="entry name" value="Vav guanine nucleotide exchange factor 1"/>
    <property type="match status" value="1"/>
</dbReference>
<dbReference type="FunFam" id="1.10.418.10:FF:000019">
    <property type="entry name" value="Vav guanine nucleotide exchange factor 2"/>
    <property type="match status" value="1"/>
</dbReference>
<dbReference type="FunFam" id="2.30.29.30:FF:000050">
    <property type="entry name" value="Vav guanine nucleotide exchange factor 2"/>
    <property type="match status" value="1"/>
</dbReference>
<dbReference type="FunFam" id="3.30.505.10:FF:000024">
    <property type="entry name" value="Vav guanine nucleotide exchange factor 2"/>
    <property type="match status" value="1"/>
</dbReference>
<dbReference type="FunFam" id="2.30.30.40:FF:000039">
    <property type="entry name" value="Vav guanine nucleotide exchange factor 3"/>
    <property type="match status" value="1"/>
</dbReference>
<dbReference type="FunFam" id="2.30.30.40:FF:000108">
    <property type="entry name" value="Vav guanine nucleotide exchange factor 3"/>
    <property type="match status" value="1"/>
</dbReference>
<dbReference type="Gene3D" id="3.30.60.20">
    <property type="match status" value="1"/>
</dbReference>
<dbReference type="Gene3D" id="1.10.418.10">
    <property type="entry name" value="Calponin-like domain"/>
    <property type="match status" value="1"/>
</dbReference>
<dbReference type="Gene3D" id="1.20.900.10">
    <property type="entry name" value="Dbl homology (DH) domain"/>
    <property type="match status" value="1"/>
</dbReference>
<dbReference type="Gene3D" id="2.30.29.30">
    <property type="entry name" value="Pleckstrin-homology domain (PH domain)/Phosphotyrosine-binding domain (PTB)"/>
    <property type="match status" value="1"/>
</dbReference>
<dbReference type="Gene3D" id="3.30.505.10">
    <property type="entry name" value="SH2 domain"/>
    <property type="match status" value="1"/>
</dbReference>
<dbReference type="Gene3D" id="2.30.30.40">
    <property type="entry name" value="SH3 Domains"/>
    <property type="match status" value="2"/>
</dbReference>
<dbReference type="InterPro" id="IPR022613">
    <property type="entry name" value="CAMSAP-like_CH_dom"/>
</dbReference>
<dbReference type="InterPro" id="IPR001715">
    <property type="entry name" value="CH_dom"/>
</dbReference>
<dbReference type="InterPro" id="IPR036872">
    <property type="entry name" value="CH_dom_sf"/>
</dbReference>
<dbReference type="InterPro" id="IPR035899">
    <property type="entry name" value="DBL_dom_sf"/>
</dbReference>
<dbReference type="InterPro" id="IPR000219">
    <property type="entry name" value="DH_dom"/>
</dbReference>
<dbReference type="InterPro" id="IPR001331">
    <property type="entry name" value="GDS_CDC24_CS"/>
</dbReference>
<dbReference type="InterPro" id="IPR002219">
    <property type="entry name" value="PE/DAG-bd"/>
</dbReference>
<dbReference type="InterPro" id="IPR011993">
    <property type="entry name" value="PH-like_dom_sf"/>
</dbReference>
<dbReference type="InterPro" id="IPR001849">
    <property type="entry name" value="PH_domain"/>
</dbReference>
<dbReference type="InterPro" id="IPR037832">
    <property type="entry name" value="PH_Vav"/>
</dbReference>
<dbReference type="InterPro" id="IPR000980">
    <property type="entry name" value="SH2"/>
</dbReference>
<dbReference type="InterPro" id="IPR036860">
    <property type="entry name" value="SH2_dom_sf"/>
</dbReference>
<dbReference type="InterPro" id="IPR036028">
    <property type="entry name" value="SH3-like_dom_sf"/>
</dbReference>
<dbReference type="InterPro" id="IPR001452">
    <property type="entry name" value="SH3_domain"/>
</dbReference>
<dbReference type="InterPro" id="IPR003096">
    <property type="entry name" value="SM22_calponin"/>
</dbReference>
<dbReference type="InterPro" id="IPR055251">
    <property type="entry name" value="SOS1_NGEF_PH"/>
</dbReference>
<dbReference type="InterPro" id="IPR035879">
    <property type="entry name" value="VAV1_SH2"/>
</dbReference>
<dbReference type="InterPro" id="IPR035730">
    <property type="entry name" value="VAV1_SH3_1"/>
</dbReference>
<dbReference type="InterPro" id="IPR035729">
    <property type="entry name" value="VAV1_SH3_2"/>
</dbReference>
<dbReference type="PANTHER" id="PTHR45818">
    <property type="entry name" value="PROTEIN VAV"/>
    <property type="match status" value="1"/>
</dbReference>
<dbReference type="PANTHER" id="PTHR45818:SF2">
    <property type="entry name" value="PROTO-ONCOGENE VAV"/>
    <property type="match status" value="1"/>
</dbReference>
<dbReference type="Pfam" id="PF00130">
    <property type="entry name" value="C1_1"/>
    <property type="match status" value="1"/>
</dbReference>
<dbReference type="Pfam" id="PF11971">
    <property type="entry name" value="CAMSAP_CH"/>
    <property type="match status" value="1"/>
</dbReference>
<dbReference type="Pfam" id="PF00621">
    <property type="entry name" value="RhoGEF"/>
    <property type="match status" value="1"/>
</dbReference>
<dbReference type="Pfam" id="PF00017">
    <property type="entry name" value="SH2"/>
    <property type="match status" value="1"/>
</dbReference>
<dbReference type="Pfam" id="PF00018">
    <property type="entry name" value="SH3_1"/>
    <property type="match status" value="2"/>
</dbReference>
<dbReference type="Pfam" id="PF22697">
    <property type="entry name" value="SOS1_NGEF_PH"/>
    <property type="match status" value="1"/>
</dbReference>
<dbReference type="PRINTS" id="PR00401">
    <property type="entry name" value="SH2DOMAIN"/>
</dbReference>
<dbReference type="PRINTS" id="PR00452">
    <property type="entry name" value="SH3DOMAIN"/>
</dbReference>
<dbReference type="PRINTS" id="PR00888">
    <property type="entry name" value="SM22CALPONIN"/>
</dbReference>
<dbReference type="SMART" id="SM00109">
    <property type="entry name" value="C1"/>
    <property type="match status" value="1"/>
</dbReference>
<dbReference type="SMART" id="SM00033">
    <property type="entry name" value="CH"/>
    <property type="match status" value="1"/>
</dbReference>
<dbReference type="SMART" id="SM00233">
    <property type="entry name" value="PH"/>
    <property type="match status" value="1"/>
</dbReference>
<dbReference type="SMART" id="SM00325">
    <property type="entry name" value="RhoGEF"/>
    <property type="match status" value="1"/>
</dbReference>
<dbReference type="SMART" id="SM00252">
    <property type="entry name" value="SH2"/>
    <property type="match status" value="1"/>
</dbReference>
<dbReference type="SMART" id="SM00326">
    <property type="entry name" value="SH3"/>
    <property type="match status" value="2"/>
</dbReference>
<dbReference type="SUPFAM" id="SSF47576">
    <property type="entry name" value="Calponin-homology domain, CH-domain"/>
    <property type="match status" value="1"/>
</dbReference>
<dbReference type="SUPFAM" id="SSF48065">
    <property type="entry name" value="DBL homology domain (DH-domain)"/>
    <property type="match status" value="1"/>
</dbReference>
<dbReference type="SUPFAM" id="SSF50729">
    <property type="entry name" value="PH domain-like"/>
    <property type="match status" value="1"/>
</dbReference>
<dbReference type="SUPFAM" id="SSF55550">
    <property type="entry name" value="SH2 domain"/>
    <property type="match status" value="1"/>
</dbReference>
<dbReference type="SUPFAM" id="SSF50044">
    <property type="entry name" value="SH3-domain"/>
    <property type="match status" value="1"/>
</dbReference>
<dbReference type="PROSITE" id="PS50021">
    <property type="entry name" value="CH"/>
    <property type="match status" value="1"/>
</dbReference>
<dbReference type="PROSITE" id="PS00741">
    <property type="entry name" value="DH_1"/>
    <property type="match status" value="1"/>
</dbReference>
<dbReference type="PROSITE" id="PS50010">
    <property type="entry name" value="DH_2"/>
    <property type="match status" value="1"/>
</dbReference>
<dbReference type="PROSITE" id="PS50003">
    <property type="entry name" value="PH_DOMAIN"/>
    <property type="match status" value="1"/>
</dbReference>
<dbReference type="PROSITE" id="PS50001">
    <property type="entry name" value="SH2"/>
    <property type="match status" value="1"/>
</dbReference>
<dbReference type="PROSITE" id="PS50002">
    <property type="entry name" value="SH3"/>
    <property type="match status" value="2"/>
</dbReference>
<dbReference type="PROSITE" id="PS00479">
    <property type="entry name" value="ZF_DAG_PE_1"/>
    <property type="match status" value="1"/>
</dbReference>
<dbReference type="PROSITE" id="PS50081">
    <property type="entry name" value="ZF_DAG_PE_2"/>
    <property type="match status" value="1"/>
</dbReference>
<organism>
    <name type="scientific">Bos taurus</name>
    <name type="common">Bovine</name>
    <dbReference type="NCBI Taxonomy" id="9913"/>
    <lineage>
        <taxon>Eukaryota</taxon>
        <taxon>Metazoa</taxon>
        <taxon>Chordata</taxon>
        <taxon>Craniata</taxon>
        <taxon>Vertebrata</taxon>
        <taxon>Euteleostomi</taxon>
        <taxon>Mammalia</taxon>
        <taxon>Eutheria</taxon>
        <taxon>Laurasiatheria</taxon>
        <taxon>Artiodactyla</taxon>
        <taxon>Ruminantia</taxon>
        <taxon>Pecora</taxon>
        <taxon>Bovidae</taxon>
        <taxon>Bovinae</taxon>
        <taxon>Bos</taxon>
    </lineage>
</organism>
<feature type="chain" id="PRO_0000343900" description="Proto-oncogene vav">
    <location>
        <begin position="1"/>
        <end position="844"/>
    </location>
</feature>
<feature type="domain" description="Calponin-homology (CH)" evidence="4">
    <location>
        <begin position="1"/>
        <end position="119"/>
    </location>
</feature>
<feature type="domain" description="DH" evidence="5">
    <location>
        <begin position="193"/>
        <end position="372"/>
    </location>
</feature>
<feature type="domain" description="PH" evidence="6">
    <location>
        <begin position="401"/>
        <end position="503"/>
    </location>
</feature>
<feature type="domain" description="SH3 1" evidence="8">
    <location>
        <begin position="591"/>
        <end position="659"/>
    </location>
</feature>
<feature type="domain" description="SH2" evidence="7">
    <location>
        <begin position="670"/>
        <end position="764"/>
    </location>
</feature>
<feature type="domain" description="SH3 2" evidence="8">
    <location>
        <begin position="781"/>
        <end position="841"/>
    </location>
</feature>
<feature type="zinc finger region" description="Phorbol-ester/DAG-type" evidence="9">
    <location>
        <begin position="514"/>
        <end position="563"/>
    </location>
</feature>
<feature type="region of interest" description="Disordered" evidence="10">
    <location>
        <begin position="567"/>
        <end position="589"/>
    </location>
</feature>
<feature type="modified residue" description="Phosphotyrosine" evidence="2">
    <location>
        <position position="825"/>
    </location>
</feature>
<feature type="modified residue" description="Phosphotyrosine" evidence="3">
    <location>
        <position position="843"/>
    </location>
</feature>
<proteinExistence type="evidence at transcript level"/>
<comment type="function">
    <text evidence="1">Couples tyrosine kinase signals with the activation of the Rho/Rac GTPases, thus leading to cell differentiation and/or proliferation.</text>
</comment>
<comment type="subunit">
    <text evidence="2 3">Interacts with SHB (By similarity). Interacts with APS, DOCK2, GRB2, GRB3, DOCK2, SLA, TEC and ZNF655/VIK. Interacts with SIAH2; without leading to its degradation. Associates with BLNK, PLCG1, GRB2 and NCK1 in a B-cell antigen receptor-dependent fashion. Interacts with CBLB; which inhibits tyrosine phosphorylation and down-regulates activity. May interact with CCPG1. Interacts with CLNK. Interacts with THEMIS2 (By similarity). Interacts with NEK3 and this interaction is prolactin-dependent. Interacts with ITK. Interacts with PTK2B/PYK2 (By similarity). Interacts with HCK. Interacts with PTK2B/PYK2. Interacts (via SH2 domain) with SYK (By similarity). Interacts with ANKRD54. Interacts with CD6 (By similarity). Interacts with LCP2; this interaction plays a role in TCR-mediated cytokine production (By similarity).</text>
</comment>
<comment type="domain">
    <text evidence="1">The DH domain is involved in interaction with CCPG1.</text>
</comment>
<comment type="PTM">
    <text evidence="1">Phosphorylated by FYN. Phosphorylated on tyrosine residues by HCK in response to IFNG and bacterial lipopolysaccharide (LPS) (By similarity).</text>
</comment>
<comment type="miscellaneous">
    <text>'Vav' stands for the sixth letter of the Hebrew alphabet.</text>
</comment>
<evidence type="ECO:0000250" key="1"/>
<evidence type="ECO:0000250" key="2">
    <source>
        <dbReference type="UniProtKB" id="P15498"/>
    </source>
</evidence>
<evidence type="ECO:0000250" key="3">
    <source>
        <dbReference type="UniProtKB" id="P27870"/>
    </source>
</evidence>
<evidence type="ECO:0000255" key="4">
    <source>
        <dbReference type="PROSITE-ProRule" id="PRU00044"/>
    </source>
</evidence>
<evidence type="ECO:0000255" key="5">
    <source>
        <dbReference type="PROSITE-ProRule" id="PRU00062"/>
    </source>
</evidence>
<evidence type="ECO:0000255" key="6">
    <source>
        <dbReference type="PROSITE-ProRule" id="PRU00145"/>
    </source>
</evidence>
<evidence type="ECO:0000255" key="7">
    <source>
        <dbReference type="PROSITE-ProRule" id="PRU00191"/>
    </source>
</evidence>
<evidence type="ECO:0000255" key="8">
    <source>
        <dbReference type="PROSITE-ProRule" id="PRU00192"/>
    </source>
</evidence>
<evidence type="ECO:0000255" key="9">
    <source>
        <dbReference type="PROSITE-ProRule" id="PRU00226"/>
    </source>
</evidence>
<evidence type="ECO:0000256" key="10">
    <source>
        <dbReference type="SAM" id="MobiDB-lite"/>
    </source>
</evidence>